<name>Y1387_METJA</name>
<comment type="similarity">
    <text evidence="1">Belongs to the LarC family.</text>
</comment>
<gene>
    <name type="ordered locus">MJ1387</name>
</gene>
<keyword id="KW-0533">Nickel</keyword>
<keyword id="KW-1185">Reference proteome</keyword>
<sequence>MFLLDPFSGISGDMFLSAMIDFVDKEDFINTIKKVIDVEIEIKKVKKCHILANKVNIIPKCINCNANTYKDIKNVIKSSDIQEDIKITALEILKILAEAESKVHNVDVENVHFHEVGNYDTIADIVGAAYIINKLNLKNNCLYKPINVGNGFVRTEHGLLPVPAPATAEILKGLKIFFSDINEELTTPTGSAIIKYINPKLAKGAFIIKEVSYGAGDKDLNLLNALRVFRVEDIKREDIVLLETNVDDISAEILGYLYEVLDGKVRDLHFIPTYMKKNRPAYTIRAIVDRDIAEEVAKIIMRETGSLGVRIFDIERITADREFKTIKLFDESVRLKVGRVNDEIISQKPEFEDLKNIAKKYGIPLKDLYKLINISQIKN</sequence>
<proteinExistence type="inferred from homology"/>
<organism>
    <name type="scientific">Methanocaldococcus jannaschii (strain ATCC 43067 / DSM 2661 / JAL-1 / JCM 10045 / NBRC 100440)</name>
    <name type="common">Methanococcus jannaschii</name>
    <dbReference type="NCBI Taxonomy" id="243232"/>
    <lineage>
        <taxon>Archaea</taxon>
        <taxon>Methanobacteriati</taxon>
        <taxon>Methanobacteriota</taxon>
        <taxon>Methanomada group</taxon>
        <taxon>Methanococci</taxon>
        <taxon>Methanococcales</taxon>
        <taxon>Methanocaldococcaceae</taxon>
        <taxon>Methanocaldococcus</taxon>
    </lineage>
</organism>
<dbReference type="EMBL" id="L77117">
    <property type="protein sequence ID" value="AAB99396.1"/>
    <property type="molecule type" value="Genomic_DNA"/>
</dbReference>
<dbReference type="PIR" id="B64473">
    <property type="entry name" value="B64473"/>
</dbReference>
<dbReference type="RefSeq" id="WP_010870904.1">
    <property type="nucleotide sequence ID" value="NC_000909.1"/>
</dbReference>
<dbReference type="SMR" id="Q58782"/>
<dbReference type="STRING" id="243232.MJ_1387"/>
<dbReference type="PaxDb" id="243232-MJ_1387"/>
<dbReference type="EnsemblBacteria" id="AAB99396">
    <property type="protein sequence ID" value="AAB99396"/>
    <property type="gene ID" value="MJ_1387"/>
</dbReference>
<dbReference type="GeneID" id="1452290"/>
<dbReference type="KEGG" id="mja:MJ_1387"/>
<dbReference type="eggNOG" id="arCOG02701">
    <property type="taxonomic scope" value="Archaea"/>
</dbReference>
<dbReference type="HOGENOM" id="CLU_028523_2_1_2"/>
<dbReference type="InParanoid" id="Q58782"/>
<dbReference type="OrthoDB" id="10691at2157"/>
<dbReference type="PhylomeDB" id="Q58782"/>
<dbReference type="Proteomes" id="UP000000805">
    <property type="component" value="Chromosome"/>
</dbReference>
<dbReference type="GO" id="GO:0016829">
    <property type="term" value="F:lyase activity"/>
    <property type="evidence" value="ECO:0007669"/>
    <property type="project" value="UniProtKB-UniRule"/>
</dbReference>
<dbReference type="GO" id="GO:0016151">
    <property type="term" value="F:nickel cation binding"/>
    <property type="evidence" value="ECO:0007669"/>
    <property type="project" value="UniProtKB-UniRule"/>
</dbReference>
<dbReference type="Gene3D" id="3.10.20.300">
    <property type="entry name" value="mk0293 like domain"/>
    <property type="match status" value="1"/>
</dbReference>
<dbReference type="Gene3D" id="3.30.70.1380">
    <property type="entry name" value="Transcriptional regulatory protein pf0864 domain like"/>
    <property type="match status" value="1"/>
</dbReference>
<dbReference type="HAMAP" id="MF_01074">
    <property type="entry name" value="LarC"/>
    <property type="match status" value="1"/>
</dbReference>
<dbReference type="InterPro" id="IPR002822">
    <property type="entry name" value="Ni_insertion"/>
</dbReference>
<dbReference type="NCBIfam" id="TIGR00299">
    <property type="entry name" value="nickel pincer cofactor biosynthesis protein LarC"/>
    <property type="match status" value="1"/>
</dbReference>
<dbReference type="PANTHER" id="PTHR36566">
    <property type="entry name" value="NICKEL INSERTION PROTEIN-RELATED"/>
    <property type="match status" value="1"/>
</dbReference>
<dbReference type="PANTHER" id="PTHR36566:SF1">
    <property type="entry name" value="PYRIDINIUM-3,5-BISTHIOCARBOXYLIC ACID MONONUCLEOTIDE NICKEL INSERTION PROTEIN"/>
    <property type="match status" value="1"/>
</dbReference>
<dbReference type="Pfam" id="PF01969">
    <property type="entry name" value="Ni_insertion"/>
    <property type="match status" value="1"/>
</dbReference>
<feature type="chain" id="PRO_0000146860" description="Putative nickel insertion protein">
    <location>
        <begin position="1"/>
        <end position="379"/>
    </location>
</feature>
<reference key="1">
    <citation type="journal article" date="1996" name="Science">
        <title>Complete genome sequence of the methanogenic archaeon, Methanococcus jannaschii.</title>
        <authorList>
            <person name="Bult C.J."/>
            <person name="White O."/>
            <person name="Olsen G.J."/>
            <person name="Zhou L."/>
            <person name="Fleischmann R.D."/>
            <person name="Sutton G.G."/>
            <person name="Blake J.A."/>
            <person name="FitzGerald L.M."/>
            <person name="Clayton R.A."/>
            <person name="Gocayne J.D."/>
            <person name="Kerlavage A.R."/>
            <person name="Dougherty B.A."/>
            <person name="Tomb J.-F."/>
            <person name="Adams M.D."/>
            <person name="Reich C.I."/>
            <person name="Overbeek R."/>
            <person name="Kirkness E.F."/>
            <person name="Weinstock K.G."/>
            <person name="Merrick J.M."/>
            <person name="Glodek A."/>
            <person name="Scott J.L."/>
            <person name="Geoghagen N.S.M."/>
            <person name="Weidman J.F."/>
            <person name="Fuhrmann J.L."/>
            <person name="Nguyen D."/>
            <person name="Utterback T.R."/>
            <person name="Kelley J.M."/>
            <person name="Peterson J.D."/>
            <person name="Sadow P.W."/>
            <person name="Hanna M.C."/>
            <person name="Cotton M.D."/>
            <person name="Roberts K.M."/>
            <person name="Hurst M.A."/>
            <person name="Kaine B.P."/>
            <person name="Borodovsky M."/>
            <person name="Klenk H.-P."/>
            <person name="Fraser C.M."/>
            <person name="Smith H.O."/>
            <person name="Woese C.R."/>
            <person name="Venter J.C."/>
        </authorList>
    </citation>
    <scope>NUCLEOTIDE SEQUENCE [LARGE SCALE GENOMIC DNA]</scope>
    <source>
        <strain>ATCC 43067 / DSM 2661 / JAL-1 / JCM 10045 / NBRC 100440</strain>
    </source>
</reference>
<evidence type="ECO:0000255" key="1">
    <source>
        <dbReference type="HAMAP-Rule" id="MF_01074"/>
    </source>
</evidence>
<protein>
    <recommendedName>
        <fullName evidence="1">Putative nickel insertion protein</fullName>
    </recommendedName>
</protein>
<accession>Q58782</accession>